<comment type="function">
    <text evidence="1">Required for synthesis of pyridoxal-5-phosphate from vitamin B6.</text>
</comment>
<comment type="catalytic activity">
    <reaction>
        <text>pyridoxal + ATP = pyridoxal 5'-phosphate + ADP + H(+)</text>
        <dbReference type="Rhea" id="RHEA:10224"/>
        <dbReference type="ChEBI" id="CHEBI:15378"/>
        <dbReference type="ChEBI" id="CHEBI:17310"/>
        <dbReference type="ChEBI" id="CHEBI:30616"/>
        <dbReference type="ChEBI" id="CHEBI:456216"/>
        <dbReference type="ChEBI" id="CHEBI:597326"/>
        <dbReference type="EC" id="2.7.1.35"/>
    </reaction>
</comment>
<comment type="cofactor">
    <cofactor evidence="1">
        <name>a divalent metal cation</name>
        <dbReference type="ChEBI" id="CHEBI:60240"/>
    </cofactor>
</comment>
<comment type="subcellular location">
    <subcellularLocation>
        <location evidence="2">Cytoplasm</location>
    </subcellularLocation>
    <subcellularLocation>
        <location evidence="2">Nucleus</location>
    </subcellularLocation>
</comment>
<comment type="similarity">
    <text evidence="3">Belongs to the pyridoxine kinase family.</text>
</comment>
<feature type="chain" id="PRO_0000339162" description="Putative pyridoxal kinase C6F6.11c">
    <location>
        <begin position="1"/>
        <end position="309"/>
    </location>
</feature>
<feature type="binding site" evidence="1">
    <location>
        <position position="12"/>
    </location>
    <ligand>
        <name>substrate</name>
    </ligand>
</feature>
<feature type="binding site" evidence="1">
    <location>
        <position position="123"/>
    </location>
    <ligand>
        <name>substrate</name>
    </ligand>
</feature>
<feature type="binding site" evidence="1">
    <location>
        <begin position="182"/>
        <end position="183"/>
    </location>
    <ligand>
        <name>ATP</name>
        <dbReference type="ChEBI" id="CHEBI:30616"/>
    </ligand>
</feature>
<feature type="binding site" evidence="1">
    <location>
        <begin position="209"/>
        <end position="221"/>
    </location>
    <ligand>
        <name>ATP</name>
        <dbReference type="ChEBI" id="CHEBI:30616"/>
    </ligand>
</feature>
<feature type="binding site" evidence="1">
    <location>
        <position position="222"/>
    </location>
    <ligand>
        <name>substrate</name>
    </ligand>
</feature>
<dbReference type="EC" id="2.7.1.35"/>
<dbReference type="EMBL" id="CU329670">
    <property type="protein sequence ID" value="CAB11734.1"/>
    <property type="molecule type" value="Genomic_DNA"/>
</dbReference>
<dbReference type="PIR" id="T39045">
    <property type="entry name" value="T39045"/>
</dbReference>
<dbReference type="RefSeq" id="NP_593904.1">
    <property type="nucleotide sequence ID" value="NM_001019334.2"/>
</dbReference>
<dbReference type="SMR" id="O14242"/>
<dbReference type="BioGRID" id="278854">
    <property type="interactions" value="18"/>
</dbReference>
<dbReference type="FunCoup" id="O14242">
    <property type="interactions" value="526"/>
</dbReference>
<dbReference type="STRING" id="284812.O14242"/>
<dbReference type="iPTMnet" id="O14242"/>
<dbReference type="PaxDb" id="4896-SPAC6F6.11c.1"/>
<dbReference type="EnsemblFungi" id="SPAC6F6.11c.1">
    <property type="protein sequence ID" value="SPAC6F6.11c.1:pep"/>
    <property type="gene ID" value="SPAC6F6.11c"/>
</dbReference>
<dbReference type="KEGG" id="spo:2542390"/>
<dbReference type="PomBase" id="SPAC6F6.11c"/>
<dbReference type="VEuPathDB" id="FungiDB:SPAC6F6.11c"/>
<dbReference type="eggNOG" id="KOG2599">
    <property type="taxonomic scope" value="Eukaryota"/>
</dbReference>
<dbReference type="HOGENOM" id="CLU_046496_1_0_1"/>
<dbReference type="InParanoid" id="O14242"/>
<dbReference type="OMA" id="HTQYGQW"/>
<dbReference type="PhylomeDB" id="O14242"/>
<dbReference type="PRO" id="PR:O14242"/>
<dbReference type="Proteomes" id="UP000002485">
    <property type="component" value="Chromosome I"/>
</dbReference>
<dbReference type="GO" id="GO:0005829">
    <property type="term" value="C:cytosol"/>
    <property type="evidence" value="ECO:0007005"/>
    <property type="project" value="PomBase"/>
</dbReference>
<dbReference type="GO" id="GO:0005634">
    <property type="term" value="C:nucleus"/>
    <property type="evidence" value="ECO:0007005"/>
    <property type="project" value="PomBase"/>
</dbReference>
<dbReference type="GO" id="GO:0005524">
    <property type="term" value="F:ATP binding"/>
    <property type="evidence" value="ECO:0007669"/>
    <property type="project" value="UniProtKB-KW"/>
</dbReference>
<dbReference type="GO" id="GO:0046872">
    <property type="term" value="F:metal ion binding"/>
    <property type="evidence" value="ECO:0007669"/>
    <property type="project" value="UniProtKB-KW"/>
</dbReference>
<dbReference type="GO" id="GO:0008478">
    <property type="term" value="F:pyridoxal kinase activity"/>
    <property type="evidence" value="ECO:0000318"/>
    <property type="project" value="GO_Central"/>
</dbReference>
<dbReference type="GO" id="GO:0009443">
    <property type="term" value="P:pyridoxal 5'-phosphate salvage"/>
    <property type="evidence" value="ECO:0000318"/>
    <property type="project" value="GO_Central"/>
</dbReference>
<dbReference type="CDD" id="cd01173">
    <property type="entry name" value="pyridoxal_pyridoxamine_kinase"/>
    <property type="match status" value="1"/>
</dbReference>
<dbReference type="FunFam" id="3.40.1190.20:FF:000143">
    <property type="entry name" value="Putative pyridoxal kinase C6F6.11c"/>
    <property type="match status" value="1"/>
</dbReference>
<dbReference type="Gene3D" id="3.40.1190.20">
    <property type="match status" value="1"/>
</dbReference>
<dbReference type="InterPro" id="IPR013749">
    <property type="entry name" value="PM/HMP-P_kinase-1"/>
</dbReference>
<dbReference type="InterPro" id="IPR004625">
    <property type="entry name" value="PyrdxlKinase"/>
</dbReference>
<dbReference type="InterPro" id="IPR029056">
    <property type="entry name" value="Ribokinase-like"/>
</dbReference>
<dbReference type="NCBIfam" id="TIGR00687">
    <property type="entry name" value="pyridox_kin"/>
    <property type="match status" value="1"/>
</dbReference>
<dbReference type="PANTHER" id="PTHR10534">
    <property type="entry name" value="PYRIDOXAL KINASE"/>
    <property type="match status" value="1"/>
</dbReference>
<dbReference type="PANTHER" id="PTHR10534:SF16">
    <property type="entry name" value="PYRIDOXAL KINASE C6F6.11C-RELATED"/>
    <property type="match status" value="1"/>
</dbReference>
<dbReference type="Pfam" id="PF08543">
    <property type="entry name" value="Phos_pyr_kin"/>
    <property type="match status" value="1"/>
</dbReference>
<dbReference type="SUPFAM" id="SSF53613">
    <property type="entry name" value="Ribokinase-like"/>
    <property type="match status" value="1"/>
</dbReference>
<name>YELB_SCHPO</name>
<protein>
    <recommendedName>
        <fullName>Putative pyridoxal kinase C6F6.11c</fullName>
        <ecNumber>2.7.1.35</ecNumber>
    </recommendedName>
</protein>
<proteinExistence type="inferred from homology"/>
<keyword id="KW-0067">ATP-binding</keyword>
<keyword id="KW-0963">Cytoplasm</keyword>
<keyword id="KW-0418">Kinase</keyword>
<keyword id="KW-0479">Metal-binding</keyword>
<keyword id="KW-0547">Nucleotide-binding</keyword>
<keyword id="KW-0539">Nucleus</keyword>
<keyword id="KW-1185">Reference proteome</keyword>
<keyword id="KW-0808">Transferase</keyword>
<keyword id="KW-0862">Zinc</keyword>
<accession>O14242</accession>
<evidence type="ECO:0000250" key="1"/>
<evidence type="ECO:0000269" key="2">
    <source>
    </source>
</evidence>
<evidence type="ECO:0000305" key="3"/>
<reference key="1">
    <citation type="journal article" date="2002" name="Nature">
        <title>The genome sequence of Schizosaccharomyces pombe.</title>
        <authorList>
            <person name="Wood V."/>
            <person name="Gwilliam R."/>
            <person name="Rajandream M.A."/>
            <person name="Lyne M.H."/>
            <person name="Lyne R."/>
            <person name="Stewart A."/>
            <person name="Sgouros J.G."/>
            <person name="Peat N."/>
            <person name="Hayles J."/>
            <person name="Baker S.G."/>
            <person name="Basham D."/>
            <person name="Bowman S."/>
            <person name="Brooks K."/>
            <person name="Brown D."/>
            <person name="Brown S."/>
            <person name="Chillingworth T."/>
            <person name="Churcher C.M."/>
            <person name="Collins M."/>
            <person name="Connor R."/>
            <person name="Cronin A."/>
            <person name="Davis P."/>
            <person name="Feltwell T."/>
            <person name="Fraser A."/>
            <person name="Gentles S."/>
            <person name="Goble A."/>
            <person name="Hamlin N."/>
            <person name="Harris D.E."/>
            <person name="Hidalgo J."/>
            <person name="Hodgson G."/>
            <person name="Holroyd S."/>
            <person name="Hornsby T."/>
            <person name="Howarth S."/>
            <person name="Huckle E.J."/>
            <person name="Hunt S."/>
            <person name="Jagels K."/>
            <person name="James K.D."/>
            <person name="Jones L."/>
            <person name="Jones M."/>
            <person name="Leather S."/>
            <person name="McDonald S."/>
            <person name="McLean J."/>
            <person name="Mooney P."/>
            <person name="Moule S."/>
            <person name="Mungall K.L."/>
            <person name="Murphy L.D."/>
            <person name="Niblett D."/>
            <person name="Odell C."/>
            <person name="Oliver K."/>
            <person name="O'Neil S."/>
            <person name="Pearson D."/>
            <person name="Quail M.A."/>
            <person name="Rabbinowitsch E."/>
            <person name="Rutherford K.M."/>
            <person name="Rutter S."/>
            <person name="Saunders D."/>
            <person name="Seeger K."/>
            <person name="Sharp S."/>
            <person name="Skelton J."/>
            <person name="Simmonds M.N."/>
            <person name="Squares R."/>
            <person name="Squares S."/>
            <person name="Stevens K."/>
            <person name="Taylor K."/>
            <person name="Taylor R.G."/>
            <person name="Tivey A."/>
            <person name="Walsh S.V."/>
            <person name="Warren T."/>
            <person name="Whitehead S."/>
            <person name="Woodward J.R."/>
            <person name="Volckaert G."/>
            <person name="Aert R."/>
            <person name="Robben J."/>
            <person name="Grymonprez B."/>
            <person name="Weltjens I."/>
            <person name="Vanstreels E."/>
            <person name="Rieger M."/>
            <person name="Schaefer M."/>
            <person name="Mueller-Auer S."/>
            <person name="Gabel C."/>
            <person name="Fuchs M."/>
            <person name="Duesterhoeft A."/>
            <person name="Fritzc C."/>
            <person name="Holzer E."/>
            <person name="Moestl D."/>
            <person name="Hilbert H."/>
            <person name="Borzym K."/>
            <person name="Langer I."/>
            <person name="Beck A."/>
            <person name="Lehrach H."/>
            <person name="Reinhardt R."/>
            <person name="Pohl T.M."/>
            <person name="Eger P."/>
            <person name="Zimmermann W."/>
            <person name="Wedler H."/>
            <person name="Wambutt R."/>
            <person name="Purnelle B."/>
            <person name="Goffeau A."/>
            <person name="Cadieu E."/>
            <person name="Dreano S."/>
            <person name="Gloux S."/>
            <person name="Lelaure V."/>
            <person name="Mottier S."/>
            <person name="Galibert F."/>
            <person name="Aves S.J."/>
            <person name="Xiang Z."/>
            <person name="Hunt C."/>
            <person name="Moore K."/>
            <person name="Hurst S.M."/>
            <person name="Lucas M."/>
            <person name="Rochet M."/>
            <person name="Gaillardin C."/>
            <person name="Tallada V.A."/>
            <person name="Garzon A."/>
            <person name="Thode G."/>
            <person name="Daga R.R."/>
            <person name="Cruzado L."/>
            <person name="Jimenez J."/>
            <person name="Sanchez M."/>
            <person name="del Rey F."/>
            <person name="Benito J."/>
            <person name="Dominguez A."/>
            <person name="Revuelta J.L."/>
            <person name="Moreno S."/>
            <person name="Armstrong J."/>
            <person name="Forsburg S.L."/>
            <person name="Cerutti L."/>
            <person name="Lowe T."/>
            <person name="McCombie W.R."/>
            <person name="Paulsen I."/>
            <person name="Potashkin J."/>
            <person name="Shpakovski G.V."/>
            <person name="Ussery D."/>
            <person name="Barrell B.G."/>
            <person name="Nurse P."/>
        </authorList>
    </citation>
    <scope>NUCLEOTIDE SEQUENCE [LARGE SCALE GENOMIC DNA]</scope>
    <source>
        <strain>972 / ATCC 24843</strain>
    </source>
</reference>
<reference key="2">
    <citation type="journal article" date="2006" name="Nat. Biotechnol.">
        <title>ORFeome cloning and global analysis of protein localization in the fission yeast Schizosaccharomyces pombe.</title>
        <authorList>
            <person name="Matsuyama A."/>
            <person name="Arai R."/>
            <person name="Yashiroda Y."/>
            <person name="Shirai A."/>
            <person name="Kamata A."/>
            <person name="Sekido S."/>
            <person name="Kobayashi Y."/>
            <person name="Hashimoto A."/>
            <person name="Hamamoto M."/>
            <person name="Hiraoka Y."/>
            <person name="Horinouchi S."/>
            <person name="Yoshida M."/>
        </authorList>
    </citation>
    <scope>SUBCELLULAR LOCATION [LARGE SCALE ANALYSIS]</scope>
</reference>
<sequence length="309" mass="33998">MNTTKRILAIQSSVCHGYVGNRAATFPLQLLGWDVDAIPTVELSNHAGYPIVKGRTLSAEQILDLYKGVSAANPSGYECLLTGYARGIGSVKAIMEIVRSVKSKNKKAFWVFDPVLGDNGRLYVEESIIPLYREMLPFADLITPNGFEAEILSGMRINSIDTAFKCVECLQQKYKVPRVVISSFVVEENGVEKLYCIGSSIYSKSFFVLIPVIPGIFRGTGDLFTALMAAHIAESPDCTESLASIKEDKLKKSVEMALSSVHEVIQKTADRISALGVEEYHPAYAELCIVNSQNSIIAPSKLFEAVYYY</sequence>
<gene>
    <name type="ORF">SPAC6F6.11c</name>
</gene>
<organism>
    <name type="scientific">Schizosaccharomyces pombe (strain 972 / ATCC 24843)</name>
    <name type="common">Fission yeast</name>
    <dbReference type="NCBI Taxonomy" id="284812"/>
    <lineage>
        <taxon>Eukaryota</taxon>
        <taxon>Fungi</taxon>
        <taxon>Dikarya</taxon>
        <taxon>Ascomycota</taxon>
        <taxon>Taphrinomycotina</taxon>
        <taxon>Schizosaccharomycetes</taxon>
        <taxon>Schizosaccharomycetales</taxon>
        <taxon>Schizosaccharomycetaceae</taxon>
        <taxon>Schizosaccharomyces</taxon>
    </lineage>
</organism>